<sequence>MYAVFQSGGKQHRVSEGQVVRLEKLELATGATVEFDSVLMVVNGEDVKIGAPVVAGAKVVAEVVAQGRGEKVKIVKFRRRKHSRKQQGHRQWFTEVKITGIQA</sequence>
<feature type="chain" id="PRO_1000067838" description="Large ribosomal subunit protein bL21">
    <location>
        <begin position="1"/>
        <end position="103"/>
    </location>
</feature>
<gene>
    <name evidence="1" type="primary">rplU</name>
    <name type="ordered locus">CGSHiEE_07630</name>
</gene>
<protein>
    <recommendedName>
        <fullName evidence="1">Large ribosomal subunit protein bL21</fullName>
    </recommendedName>
    <alternativeName>
        <fullName evidence="2">50S ribosomal protein L21</fullName>
    </alternativeName>
</protein>
<proteinExistence type="inferred from homology"/>
<keyword id="KW-0687">Ribonucleoprotein</keyword>
<keyword id="KW-0689">Ribosomal protein</keyword>
<keyword id="KW-0694">RNA-binding</keyword>
<keyword id="KW-0699">rRNA-binding</keyword>
<comment type="function">
    <text evidence="1">This protein binds to 23S rRNA in the presence of protein L20.</text>
</comment>
<comment type="subunit">
    <text evidence="1">Part of the 50S ribosomal subunit. Contacts protein L20.</text>
</comment>
<comment type="similarity">
    <text evidence="1">Belongs to the bacterial ribosomal protein bL21 family.</text>
</comment>
<reference key="1">
    <citation type="journal article" date="2007" name="Genome Biol.">
        <title>Characterization and modeling of the Haemophilus influenzae core and supragenomes based on the complete genomic sequences of Rd and 12 clinical nontypeable strains.</title>
        <authorList>
            <person name="Hogg J.S."/>
            <person name="Hu F.Z."/>
            <person name="Janto B."/>
            <person name="Boissy R."/>
            <person name="Hayes J."/>
            <person name="Keefe R."/>
            <person name="Post J.C."/>
            <person name="Ehrlich G.D."/>
        </authorList>
    </citation>
    <scope>NUCLEOTIDE SEQUENCE [LARGE SCALE GENOMIC DNA]</scope>
    <source>
        <strain>PittEE</strain>
    </source>
</reference>
<accession>A5UDJ4</accession>
<evidence type="ECO:0000255" key="1">
    <source>
        <dbReference type="HAMAP-Rule" id="MF_01363"/>
    </source>
</evidence>
<evidence type="ECO:0000305" key="2"/>
<name>RL21_HAEIE</name>
<organism>
    <name type="scientific">Haemophilus influenzae (strain PittEE)</name>
    <dbReference type="NCBI Taxonomy" id="374930"/>
    <lineage>
        <taxon>Bacteria</taxon>
        <taxon>Pseudomonadati</taxon>
        <taxon>Pseudomonadota</taxon>
        <taxon>Gammaproteobacteria</taxon>
        <taxon>Pasteurellales</taxon>
        <taxon>Pasteurellaceae</taxon>
        <taxon>Haemophilus</taxon>
    </lineage>
</organism>
<dbReference type="EMBL" id="CP000671">
    <property type="protein sequence ID" value="ABQ98845.1"/>
    <property type="molecule type" value="Genomic_DNA"/>
</dbReference>
<dbReference type="SMR" id="A5UDJ4"/>
<dbReference type="KEGG" id="hip:CGSHiEE_07630"/>
<dbReference type="HOGENOM" id="CLU_061463_3_2_6"/>
<dbReference type="GO" id="GO:0005737">
    <property type="term" value="C:cytoplasm"/>
    <property type="evidence" value="ECO:0007669"/>
    <property type="project" value="UniProtKB-ARBA"/>
</dbReference>
<dbReference type="GO" id="GO:1990904">
    <property type="term" value="C:ribonucleoprotein complex"/>
    <property type="evidence" value="ECO:0007669"/>
    <property type="project" value="UniProtKB-KW"/>
</dbReference>
<dbReference type="GO" id="GO:0005840">
    <property type="term" value="C:ribosome"/>
    <property type="evidence" value="ECO:0007669"/>
    <property type="project" value="UniProtKB-KW"/>
</dbReference>
<dbReference type="GO" id="GO:0019843">
    <property type="term" value="F:rRNA binding"/>
    <property type="evidence" value="ECO:0007669"/>
    <property type="project" value="UniProtKB-UniRule"/>
</dbReference>
<dbReference type="GO" id="GO:0003735">
    <property type="term" value="F:structural constituent of ribosome"/>
    <property type="evidence" value="ECO:0007669"/>
    <property type="project" value="InterPro"/>
</dbReference>
<dbReference type="GO" id="GO:0006412">
    <property type="term" value="P:translation"/>
    <property type="evidence" value="ECO:0007669"/>
    <property type="project" value="UniProtKB-UniRule"/>
</dbReference>
<dbReference type="HAMAP" id="MF_01363">
    <property type="entry name" value="Ribosomal_bL21"/>
    <property type="match status" value="1"/>
</dbReference>
<dbReference type="InterPro" id="IPR028909">
    <property type="entry name" value="bL21-like"/>
</dbReference>
<dbReference type="InterPro" id="IPR036164">
    <property type="entry name" value="bL21-like_sf"/>
</dbReference>
<dbReference type="InterPro" id="IPR001787">
    <property type="entry name" value="Ribosomal_bL21"/>
</dbReference>
<dbReference type="InterPro" id="IPR018258">
    <property type="entry name" value="Ribosomal_bL21_CS"/>
</dbReference>
<dbReference type="NCBIfam" id="TIGR00061">
    <property type="entry name" value="L21"/>
    <property type="match status" value="1"/>
</dbReference>
<dbReference type="PANTHER" id="PTHR21349">
    <property type="entry name" value="50S RIBOSOMAL PROTEIN L21"/>
    <property type="match status" value="1"/>
</dbReference>
<dbReference type="PANTHER" id="PTHR21349:SF0">
    <property type="entry name" value="LARGE RIBOSOMAL SUBUNIT PROTEIN BL21M"/>
    <property type="match status" value="1"/>
</dbReference>
<dbReference type="Pfam" id="PF00829">
    <property type="entry name" value="Ribosomal_L21p"/>
    <property type="match status" value="1"/>
</dbReference>
<dbReference type="SUPFAM" id="SSF141091">
    <property type="entry name" value="L21p-like"/>
    <property type="match status" value="1"/>
</dbReference>
<dbReference type="PROSITE" id="PS01169">
    <property type="entry name" value="RIBOSOMAL_L21"/>
    <property type="match status" value="1"/>
</dbReference>